<dbReference type="EMBL" id="CU329670">
    <property type="protein sequence ID" value="CBA11507.1"/>
    <property type="molecule type" value="Genomic_DNA"/>
</dbReference>
<dbReference type="RefSeq" id="XP_002742516.1">
    <property type="nucleotide sequence ID" value="XM_002742470.1"/>
</dbReference>
<dbReference type="PaxDb" id="4896-SPAC20G4.09.1"/>
<dbReference type="EnsemblFungi" id="SPAC20G4.09.1">
    <property type="protein sequence ID" value="SPAC20G4.09.1:pep"/>
    <property type="gene ID" value="SPAC20G4.09"/>
</dbReference>
<dbReference type="PomBase" id="SPAC20G4.09"/>
<dbReference type="VEuPathDB" id="FungiDB:SPAC20G4.09"/>
<dbReference type="HOGENOM" id="CLU_3421412_0_0_1"/>
<dbReference type="InParanoid" id="C6Y4B1"/>
<dbReference type="PRO" id="PR:C6Y4B1"/>
<dbReference type="Proteomes" id="UP000002485">
    <property type="component" value="Chromosome I"/>
</dbReference>
<reference key="1">
    <citation type="journal article" date="2002" name="Nature">
        <title>The genome sequence of Schizosaccharomyces pombe.</title>
        <authorList>
            <person name="Wood V."/>
            <person name="Gwilliam R."/>
            <person name="Rajandream M.A."/>
            <person name="Lyne M.H."/>
            <person name="Lyne R."/>
            <person name="Stewart A."/>
            <person name="Sgouros J.G."/>
            <person name="Peat N."/>
            <person name="Hayles J."/>
            <person name="Baker S.G."/>
            <person name="Basham D."/>
            <person name="Bowman S."/>
            <person name="Brooks K."/>
            <person name="Brown D."/>
            <person name="Brown S."/>
            <person name="Chillingworth T."/>
            <person name="Churcher C.M."/>
            <person name="Collins M."/>
            <person name="Connor R."/>
            <person name="Cronin A."/>
            <person name="Davis P."/>
            <person name="Feltwell T."/>
            <person name="Fraser A."/>
            <person name="Gentles S."/>
            <person name="Goble A."/>
            <person name="Hamlin N."/>
            <person name="Harris D.E."/>
            <person name="Hidalgo J."/>
            <person name="Hodgson G."/>
            <person name="Holroyd S."/>
            <person name="Hornsby T."/>
            <person name="Howarth S."/>
            <person name="Huckle E.J."/>
            <person name="Hunt S."/>
            <person name="Jagels K."/>
            <person name="James K.D."/>
            <person name="Jones L."/>
            <person name="Jones M."/>
            <person name="Leather S."/>
            <person name="McDonald S."/>
            <person name="McLean J."/>
            <person name="Mooney P."/>
            <person name="Moule S."/>
            <person name="Mungall K.L."/>
            <person name="Murphy L.D."/>
            <person name="Niblett D."/>
            <person name="Odell C."/>
            <person name="Oliver K."/>
            <person name="O'Neil S."/>
            <person name="Pearson D."/>
            <person name="Quail M.A."/>
            <person name="Rabbinowitsch E."/>
            <person name="Rutherford K.M."/>
            <person name="Rutter S."/>
            <person name="Saunders D."/>
            <person name="Seeger K."/>
            <person name="Sharp S."/>
            <person name="Skelton J."/>
            <person name="Simmonds M.N."/>
            <person name="Squares R."/>
            <person name="Squares S."/>
            <person name="Stevens K."/>
            <person name="Taylor K."/>
            <person name="Taylor R.G."/>
            <person name="Tivey A."/>
            <person name="Walsh S.V."/>
            <person name="Warren T."/>
            <person name="Whitehead S."/>
            <person name="Woodward J.R."/>
            <person name="Volckaert G."/>
            <person name="Aert R."/>
            <person name="Robben J."/>
            <person name="Grymonprez B."/>
            <person name="Weltjens I."/>
            <person name="Vanstreels E."/>
            <person name="Rieger M."/>
            <person name="Schaefer M."/>
            <person name="Mueller-Auer S."/>
            <person name="Gabel C."/>
            <person name="Fuchs M."/>
            <person name="Duesterhoeft A."/>
            <person name="Fritzc C."/>
            <person name="Holzer E."/>
            <person name="Moestl D."/>
            <person name="Hilbert H."/>
            <person name="Borzym K."/>
            <person name="Langer I."/>
            <person name="Beck A."/>
            <person name="Lehrach H."/>
            <person name="Reinhardt R."/>
            <person name="Pohl T.M."/>
            <person name="Eger P."/>
            <person name="Zimmermann W."/>
            <person name="Wedler H."/>
            <person name="Wambutt R."/>
            <person name="Purnelle B."/>
            <person name="Goffeau A."/>
            <person name="Cadieu E."/>
            <person name="Dreano S."/>
            <person name="Gloux S."/>
            <person name="Lelaure V."/>
            <person name="Mottier S."/>
            <person name="Galibert F."/>
            <person name="Aves S.J."/>
            <person name="Xiang Z."/>
            <person name="Hunt C."/>
            <person name="Moore K."/>
            <person name="Hurst S.M."/>
            <person name="Lucas M."/>
            <person name="Rochet M."/>
            <person name="Gaillardin C."/>
            <person name="Tallada V.A."/>
            <person name="Garzon A."/>
            <person name="Thode G."/>
            <person name="Daga R.R."/>
            <person name="Cruzado L."/>
            <person name="Jimenez J."/>
            <person name="Sanchez M."/>
            <person name="del Rey F."/>
            <person name="Benito J."/>
            <person name="Dominguez A."/>
            <person name="Revuelta J.L."/>
            <person name="Moreno S."/>
            <person name="Armstrong J."/>
            <person name="Forsburg S.L."/>
            <person name="Cerutti L."/>
            <person name="Lowe T."/>
            <person name="McCombie W.R."/>
            <person name="Paulsen I."/>
            <person name="Potashkin J."/>
            <person name="Shpakovski G.V."/>
            <person name="Ussery D."/>
            <person name="Barrell B.G."/>
            <person name="Nurse P."/>
        </authorList>
    </citation>
    <scope>NUCLEOTIDE SEQUENCE [LARGE SCALE GENOMIC DNA]</scope>
    <source>
        <strain>972 / ATCC 24843</strain>
    </source>
</reference>
<reference key="2">
    <citation type="journal article" date="2008" name="Nature">
        <title>Dynamic repertoire of a eukaryotic transcriptome surveyed at single-nucleotide resolution.</title>
        <authorList>
            <person name="Wilhelm B.T."/>
            <person name="Marguerat S."/>
            <person name="Watt S."/>
            <person name="Schubert F."/>
            <person name="Wood V."/>
            <person name="Goodhead I."/>
            <person name="Penkett C.J."/>
            <person name="Rogers J."/>
            <person name="Baehler J."/>
        </authorList>
    </citation>
    <scope>IDENTIFICATION</scope>
</reference>
<accession>C6Y4B1</accession>
<protein>
    <recommendedName>
        <fullName>Uncharacterized protein C20G4.09</fullName>
    </recommendedName>
</protein>
<proteinExistence type="evidence at transcript level"/>
<gene>
    <name type="ORF">SPAC20G4.09</name>
</gene>
<name>YE39_SCHPO</name>
<keyword id="KW-1185">Reference proteome</keyword>
<sequence>MTLIKYKRKNIQFYKKIIANGYAK</sequence>
<feature type="chain" id="PRO_0000389144" description="Uncharacterized protein C20G4.09">
    <location>
        <begin position="1"/>
        <end position="24"/>
    </location>
</feature>
<organism>
    <name type="scientific">Schizosaccharomyces pombe (strain 972 / ATCC 24843)</name>
    <name type="common">Fission yeast</name>
    <dbReference type="NCBI Taxonomy" id="284812"/>
    <lineage>
        <taxon>Eukaryota</taxon>
        <taxon>Fungi</taxon>
        <taxon>Dikarya</taxon>
        <taxon>Ascomycota</taxon>
        <taxon>Taphrinomycotina</taxon>
        <taxon>Schizosaccharomycetes</taxon>
        <taxon>Schizosaccharomycetales</taxon>
        <taxon>Schizosaccharomycetaceae</taxon>
        <taxon>Schizosaccharomyces</taxon>
    </lineage>
</organism>